<proteinExistence type="inferred from homology"/>
<keyword id="KW-1185">Reference proteome</keyword>
<keyword id="KW-0687">Ribonucleoprotein</keyword>
<keyword id="KW-0689">Ribosomal protein</keyword>
<keyword id="KW-0694">RNA-binding</keyword>
<keyword id="KW-0699">rRNA-binding</keyword>
<reference key="1">
    <citation type="journal article" date="2009" name="Appl. Environ. Microbiol.">
        <title>Genome analysis of the meat starter culture bacterium Staphylococcus carnosus TM300.</title>
        <authorList>
            <person name="Rosenstein R."/>
            <person name="Nerz C."/>
            <person name="Biswas L."/>
            <person name="Resch A."/>
            <person name="Raddatz G."/>
            <person name="Schuster S.C."/>
            <person name="Goetz F."/>
        </authorList>
    </citation>
    <scope>NUCLEOTIDE SEQUENCE [LARGE SCALE GENOMIC DNA]</scope>
    <source>
        <strain>TM300</strain>
    </source>
</reference>
<accession>B9DM16</accession>
<gene>
    <name evidence="1" type="primary">rplB</name>
    <name type="ordered locus">Sca_1732</name>
</gene>
<organism>
    <name type="scientific">Staphylococcus carnosus (strain TM300)</name>
    <dbReference type="NCBI Taxonomy" id="396513"/>
    <lineage>
        <taxon>Bacteria</taxon>
        <taxon>Bacillati</taxon>
        <taxon>Bacillota</taxon>
        <taxon>Bacilli</taxon>
        <taxon>Bacillales</taxon>
        <taxon>Staphylococcaceae</taxon>
        <taxon>Staphylococcus</taxon>
    </lineage>
</organism>
<evidence type="ECO:0000255" key="1">
    <source>
        <dbReference type="HAMAP-Rule" id="MF_01320"/>
    </source>
</evidence>
<evidence type="ECO:0000256" key="2">
    <source>
        <dbReference type="SAM" id="MobiDB-lite"/>
    </source>
</evidence>
<evidence type="ECO:0000305" key="3"/>
<comment type="function">
    <text evidence="1">One of the primary rRNA binding proteins. Required for association of the 30S and 50S subunits to form the 70S ribosome, for tRNA binding and peptide bond formation. It has been suggested to have peptidyltransferase activity; this is somewhat controversial. Makes several contacts with the 16S rRNA in the 70S ribosome.</text>
</comment>
<comment type="subunit">
    <text evidence="1">Part of the 50S ribosomal subunit. Forms a bridge to the 30S subunit in the 70S ribosome.</text>
</comment>
<comment type="similarity">
    <text evidence="1">Belongs to the universal ribosomal protein uL2 family.</text>
</comment>
<name>RL2_STACT</name>
<sequence>MALKHYKPITNGRRNMTSLDFAEITKTTPEKSLLQPLPKRAGRNNQGKLTVRHHGGGHKRQYRVIDFKRNKDGIPAKVDSIQYDPNRSANIALLVYADGEKRYIIAPKGLQVGQTIENGEEADIKTGNALPLANIPVGTTIHNIELKPGRGGQIARSAGASAQVLGKEGKYVLVRLRSGEVRMILSTCRATVGQVGNLQHELVNVGKAGRSRWKGIRPTVRGSVMNPNDHPHGGGEGRAPIGRPSPMSPWGKPTLGKKTRRGKKSSDKLIVRGRKRK</sequence>
<dbReference type="EMBL" id="AM295250">
    <property type="protein sequence ID" value="CAL28638.1"/>
    <property type="molecule type" value="Genomic_DNA"/>
</dbReference>
<dbReference type="RefSeq" id="WP_015900974.1">
    <property type="nucleotide sequence ID" value="NC_012121.1"/>
</dbReference>
<dbReference type="SMR" id="B9DM16"/>
<dbReference type="GeneID" id="93794191"/>
<dbReference type="KEGG" id="sca:SCA_1732"/>
<dbReference type="eggNOG" id="COG0090">
    <property type="taxonomic scope" value="Bacteria"/>
</dbReference>
<dbReference type="HOGENOM" id="CLU_036235_2_1_9"/>
<dbReference type="OrthoDB" id="9778722at2"/>
<dbReference type="BioCyc" id="SCAR396513:SCA_RS08825-MONOMER"/>
<dbReference type="Proteomes" id="UP000000444">
    <property type="component" value="Chromosome"/>
</dbReference>
<dbReference type="GO" id="GO:0015934">
    <property type="term" value="C:large ribosomal subunit"/>
    <property type="evidence" value="ECO:0007669"/>
    <property type="project" value="InterPro"/>
</dbReference>
<dbReference type="GO" id="GO:0019843">
    <property type="term" value="F:rRNA binding"/>
    <property type="evidence" value="ECO:0007669"/>
    <property type="project" value="UniProtKB-UniRule"/>
</dbReference>
<dbReference type="GO" id="GO:0003735">
    <property type="term" value="F:structural constituent of ribosome"/>
    <property type="evidence" value="ECO:0007669"/>
    <property type="project" value="InterPro"/>
</dbReference>
<dbReference type="GO" id="GO:0016740">
    <property type="term" value="F:transferase activity"/>
    <property type="evidence" value="ECO:0007669"/>
    <property type="project" value="InterPro"/>
</dbReference>
<dbReference type="GO" id="GO:0002181">
    <property type="term" value="P:cytoplasmic translation"/>
    <property type="evidence" value="ECO:0007669"/>
    <property type="project" value="TreeGrafter"/>
</dbReference>
<dbReference type="FunFam" id="2.30.30.30:FF:000001">
    <property type="entry name" value="50S ribosomal protein L2"/>
    <property type="match status" value="1"/>
</dbReference>
<dbReference type="FunFam" id="2.40.50.140:FF:000003">
    <property type="entry name" value="50S ribosomal protein L2"/>
    <property type="match status" value="1"/>
</dbReference>
<dbReference type="FunFam" id="4.10.950.10:FF:000001">
    <property type="entry name" value="50S ribosomal protein L2"/>
    <property type="match status" value="1"/>
</dbReference>
<dbReference type="Gene3D" id="2.30.30.30">
    <property type="match status" value="1"/>
</dbReference>
<dbReference type="Gene3D" id="2.40.50.140">
    <property type="entry name" value="Nucleic acid-binding proteins"/>
    <property type="match status" value="1"/>
</dbReference>
<dbReference type="Gene3D" id="4.10.950.10">
    <property type="entry name" value="Ribosomal protein L2, domain 3"/>
    <property type="match status" value="1"/>
</dbReference>
<dbReference type="HAMAP" id="MF_01320_B">
    <property type="entry name" value="Ribosomal_uL2_B"/>
    <property type="match status" value="1"/>
</dbReference>
<dbReference type="InterPro" id="IPR012340">
    <property type="entry name" value="NA-bd_OB-fold"/>
</dbReference>
<dbReference type="InterPro" id="IPR014722">
    <property type="entry name" value="Rib_uL2_dom2"/>
</dbReference>
<dbReference type="InterPro" id="IPR002171">
    <property type="entry name" value="Ribosomal_uL2"/>
</dbReference>
<dbReference type="InterPro" id="IPR005880">
    <property type="entry name" value="Ribosomal_uL2_bac/org-type"/>
</dbReference>
<dbReference type="InterPro" id="IPR022669">
    <property type="entry name" value="Ribosomal_uL2_C"/>
</dbReference>
<dbReference type="InterPro" id="IPR022671">
    <property type="entry name" value="Ribosomal_uL2_CS"/>
</dbReference>
<dbReference type="InterPro" id="IPR014726">
    <property type="entry name" value="Ribosomal_uL2_dom3"/>
</dbReference>
<dbReference type="InterPro" id="IPR022666">
    <property type="entry name" value="Ribosomal_uL2_RNA-bd_dom"/>
</dbReference>
<dbReference type="InterPro" id="IPR008991">
    <property type="entry name" value="Translation_prot_SH3-like_sf"/>
</dbReference>
<dbReference type="NCBIfam" id="TIGR01171">
    <property type="entry name" value="rplB_bact"/>
    <property type="match status" value="1"/>
</dbReference>
<dbReference type="PANTHER" id="PTHR13691:SF5">
    <property type="entry name" value="LARGE RIBOSOMAL SUBUNIT PROTEIN UL2M"/>
    <property type="match status" value="1"/>
</dbReference>
<dbReference type="PANTHER" id="PTHR13691">
    <property type="entry name" value="RIBOSOMAL PROTEIN L2"/>
    <property type="match status" value="1"/>
</dbReference>
<dbReference type="Pfam" id="PF00181">
    <property type="entry name" value="Ribosomal_L2"/>
    <property type="match status" value="1"/>
</dbReference>
<dbReference type="Pfam" id="PF03947">
    <property type="entry name" value="Ribosomal_L2_C"/>
    <property type="match status" value="1"/>
</dbReference>
<dbReference type="PIRSF" id="PIRSF002158">
    <property type="entry name" value="Ribosomal_L2"/>
    <property type="match status" value="1"/>
</dbReference>
<dbReference type="SMART" id="SM01383">
    <property type="entry name" value="Ribosomal_L2"/>
    <property type="match status" value="1"/>
</dbReference>
<dbReference type="SMART" id="SM01382">
    <property type="entry name" value="Ribosomal_L2_C"/>
    <property type="match status" value="1"/>
</dbReference>
<dbReference type="SUPFAM" id="SSF50249">
    <property type="entry name" value="Nucleic acid-binding proteins"/>
    <property type="match status" value="1"/>
</dbReference>
<dbReference type="SUPFAM" id="SSF50104">
    <property type="entry name" value="Translation proteins SH3-like domain"/>
    <property type="match status" value="1"/>
</dbReference>
<dbReference type="PROSITE" id="PS00467">
    <property type="entry name" value="RIBOSOMAL_L2"/>
    <property type="match status" value="1"/>
</dbReference>
<protein>
    <recommendedName>
        <fullName evidence="1">Large ribosomal subunit protein uL2</fullName>
    </recommendedName>
    <alternativeName>
        <fullName evidence="3">50S ribosomal protein L2</fullName>
    </alternativeName>
</protein>
<feature type="chain" id="PRO_1000165768" description="Large ribosomal subunit protein uL2">
    <location>
        <begin position="1"/>
        <end position="277"/>
    </location>
</feature>
<feature type="region of interest" description="Disordered" evidence="2">
    <location>
        <begin position="35"/>
        <end position="58"/>
    </location>
</feature>
<feature type="region of interest" description="Disordered" evidence="2">
    <location>
        <begin position="213"/>
        <end position="277"/>
    </location>
</feature>